<feature type="chain" id="PRO_0000166074" description="Nitrate reductase [NADH]">
    <location>
        <begin position="1"/>
        <end position="864"/>
    </location>
</feature>
<feature type="domain" description="Cytochrome b5 heme-binding" evidence="6">
    <location>
        <begin position="497"/>
        <end position="572"/>
    </location>
</feature>
<feature type="domain" description="FAD-binding FR-type" evidence="7">
    <location>
        <begin position="606"/>
        <end position="718"/>
    </location>
</feature>
<feature type="binding site" evidence="4">
    <location>
        <position position="139"/>
    </location>
    <ligand>
        <name>Mo-molybdopterin</name>
        <dbReference type="ChEBI" id="CHEBI:71302"/>
    </ligand>
    <ligandPart>
        <name>Mo</name>
        <dbReference type="ChEBI" id="CHEBI:28685"/>
    </ligandPart>
</feature>
<feature type="binding site" description="axial binding residue" evidence="6">
    <location>
        <position position="532"/>
    </location>
    <ligand>
        <name>heme</name>
        <dbReference type="ChEBI" id="CHEBI:30413"/>
    </ligand>
    <ligandPart>
        <name>Fe</name>
        <dbReference type="ChEBI" id="CHEBI:18248"/>
    </ligandPart>
</feature>
<feature type="binding site" description="axial binding residue" evidence="6">
    <location>
        <position position="555"/>
    </location>
    <ligand>
        <name>heme</name>
        <dbReference type="ChEBI" id="CHEBI:30413"/>
    </ligand>
    <ligandPart>
        <name>Fe</name>
        <dbReference type="ChEBI" id="CHEBI:18248"/>
    </ligandPart>
</feature>
<feature type="binding site" evidence="2">
    <location>
        <begin position="658"/>
        <end position="661"/>
    </location>
    <ligand>
        <name>FAD</name>
        <dbReference type="ChEBI" id="CHEBI:57692"/>
    </ligand>
</feature>
<feature type="binding site" evidence="2">
    <location>
        <begin position="675"/>
        <end position="679"/>
    </location>
    <ligand>
        <name>FAD</name>
        <dbReference type="ChEBI" id="CHEBI:57692"/>
    </ligand>
</feature>
<feature type="binding site" evidence="3">
    <location>
        <position position="680"/>
    </location>
    <ligand>
        <name>FAD</name>
        <dbReference type="ChEBI" id="CHEBI:57692"/>
    </ligand>
</feature>
<feature type="binding site" evidence="2">
    <location>
        <position position="687"/>
    </location>
    <ligand>
        <name>FAD</name>
        <dbReference type="ChEBI" id="CHEBI:57692"/>
    </ligand>
</feature>
<feature type="binding site" evidence="2">
    <location>
        <begin position="692"/>
        <end position="694"/>
    </location>
    <ligand>
        <name>FAD</name>
        <dbReference type="ChEBI" id="CHEBI:57692"/>
    </ligand>
</feature>
<feature type="binding site" evidence="2">
    <location>
        <position position="746"/>
    </location>
    <ligand>
        <name>FAD</name>
        <dbReference type="ChEBI" id="CHEBI:57692"/>
    </ligand>
</feature>
<feature type="disulfide bond" description="Interchain" evidence="5">
    <location>
        <position position="376"/>
    </location>
</feature>
<reference key="1">
    <citation type="journal article" date="1992" name="Gene">
        <title>The nitrate reductase-encoding gene of Volvox carteri: map location, sequence and induction kinetics.</title>
        <authorList>
            <person name="Gruber H."/>
            <person name="Goetinck S.D."/>
            <person name="Kirk D.L."/>
            <person name="Schmitt R."/>
        </authorList>
    </citation>
    <scope>NUCLEOTIDE SEQUENCE [GENOMIC DNA]</scope>
    <source>
        <strain>f. Nagariensis / HK10</strain>
    </source>
</reference>
<accession>P36841</accession>
<organism>
    <name type="scientific">Volvox carteri</name>
    <name type="common">Green alga</name>
    <dbReference type="NCBI Taxonomy" id="3067"/>
    <lineage>
        <taxon>Eukaryota</taxon>
        <taxon>Viridiplantae</taxon>
        <taxon>Chlorophyta</taxon>
        <taxon>core chlorophytes</taxon>
        <taxon>Chlorophyceae</taxon>
        <taxon>CS clade</taxon>
        <taxon>Chlamydomonadales</taxon>
        <taxon>Volvocaceae</taxon>
        <taxon>Volvox</taxon>
    </lineage>
</organism>
<comment type="function">
    <text>Nitrate reductase is a key enzyme involved in the first step of nitrate assimilation in plants, fungi and bacteria.</text>
</comment>
<comment type="catalytic activity">
    <reaction>
        <text>nitrite + NAD(+) + H2O = nitrate + NADH + H(+)</text>
        <dbReference type="Rhea" id="RHEA:17913"/>
        <dbReference type="ChEBI" id="CHEBI:15377"/>
        <dbReference type="ChEBI" id="CHEBI:15378"/>
        <dbReference type="ChEBI" id="CHEBI:16301"/>
        <dbReference type="ChEBI" id="CHEBI:17632"/>
        <dbReference type="ChEBI" id="CHEBI:57540"/>
        <dbReference type="ChEBI" id="CHEBI:57945"/>
        <dbReference type="EC" id="1.7.1.1"/>
    </reaction>
</comment>
<comment type="cofactor">
    <cofactor evidence="1">
        <name>FAD</name>
        <dbReference type="ChEBI" id="CHEBI:57692"/>
    </cofactor>
    <text evidence="1">Binds 1 FAD per subunit.</text>
</comment>
<comment type="cofactor">
    <cofactor evidence="1">
        <name>heme</name>
        <dbReference type="ChEBI" id="CHEBI:30413"/>
    </cofactor>
    <text evidence="1">Binds 1 heme group per subunit.</text>
</comment>
<comment type="cofactor">
    <cofactor evidence="1">
        <name>Mo-molybdopterin</name>
        <dbReference type="ChEBI" id="CHEBI:71302"/>
    </cofactor>
    <text evidence="1">Binds 1 Mo-molybdopterin (Mo-MPT) cofactor per subunit.</text>
</comment>
<comment type="subunit">
    <text evidence="1">Homodimer.</text>
</comment>
<comment type="induction">
    <text>By nitrate.</text>
</comment>
<comment type="similarity">
    <text evidence="8">Belongs to the nitrate reductase family.</text>
</comment>
<protein>
    <recommendedName>
        <fullName>Nitrate reductase [NADH]</fullName>
        <shortName>NR</shortName>
        <ecNumber>1.7.1.1</ecNumber>
    </recommendedName>
</protein>
<dbReference type="EC" id="1.7.1.1"/>
<dbReference type="EMBL" id="X64136">
    <property type="protein sequence ID" value="CAA45497.1"/>
    <property type="molecule type" value="Genomic_DNA"/>
</dbReference>
<dbReference type="PIR" id="JC1422">
    <property type="entry name" value="JC1422"/>
</dbReference>
<dbReference type="RefSeq" id="XP_002955156.1">
    <property type="nucleotide sequence ID" value="XM_002955110.1"/>
</dbReference>
<dbReference type="SMR" id="P36841"/>
<dbReference type="GeneID" id="9622111"/>
<dbReference type="KEGG" id="vcn:VOLCADRAFT_76569"/>
<dbReference type="OMA" id="KAMMPDY"/>
<dbReference type="GO" id="GO:0071949">
    <property type="term" value="F:FAD binding"/>
    <property type="evidence" value="ECO:0000250"/>
    <property type="project" value="UniProtKB"/>
</dbReference>
<dbReference type="GO" id="GO:0020037">
    <property type="term" value="F:heme binding"/>
    <property type="evidence" value="ECO:0007669"/>
    <property type="project" value="InterPro"/>
</dbReference>
<dbReference type="GO" id="GO:0030151">
    <property type="term" value="F:molybdenum ion binding"/>
    <property type="evidence" value="ECO:0000250"/>
    <property type="project" value="UniProtKB"/>
</dbReference>
<dbReference type="GO" id="GO:0043546">
    <property type="term" value="F:molybdopterin cofactor binding"/>
    <property type="evidence" value="ECO:0007669"/>
    <property type="project" value="InterPro"/>
</dbReference>
<dbReference type="GO" id="GO:0009703">
    <property type="term" value="F:nitrate reductase (NADH) activity"/>
    <property type="evidence" value="ECO:0007669"/>
    <property type="project" value="UniProtKB-EC"/>
</dbReference>
<dbReference type="GO" id="GO:0050464">
    <property type="term" value="F:nitrate reductase (NADPH) activity"/>
    <property type="evidence" value="ECO:0007669"/>
    <property type="project" value="InterPro"/>
</dbReference>
<dbReference type="GO" id="GO:0008482">
    <property type="term" value="F:sulfite oxidase activity"/>
    <property type="evidence" value="ECO:0007669"/>
    <property type="project" value="TreeGrafter"/>
</dbReference>
<dbReference type="GO" id="GO:0042128">
    <property type="term" value="P:nitrate assimilation"/>
    <property type="evidence" value="ECO:0007669"/>
    <property type="project" value="UniProtKB-KW"/>
</dbReference>
<dbReference type="GO" id="GO:0006809">
    <property type="term" value="P:nitric oxide biosynthetic process"/>
    <property type="evidence" value="ECO:0007669"/>
    <property type="project" value="InterPro"/>
</dbReference>
<dbReference type="GO" id="GO:0006790">
    <property type="term" value="P:sulfur compound metabolic process"/>
    <property type="evidence" value="ECO:0007669"/>
    <property type="project" value="TreeGrafter"/>
</dbReference>
<dbReference type="CDD" id="cd06183">
    <property type="entry name" value="cyt_b5_reduct_like"/>
    <property type="match status" value="1"/>
</dbReference>
<dbReference type="CDD" id="cd02112">
    <property type="entry name" value="eukary_NR_Moco"/>
    <property type="match status" value="1"/>
</dbReference>
<dbReference type="FunFam" id="2.40.30.10:FF:000021">
    <property type="entry name" value="NADH-cytochrome b5 reductase"/>
    <property type="match status" value="1"/>
</dbReference>
<dbReference type="FunFam" id="2.60.40.650:FF:000001">
    <property type="entry name" value="Nitrate reductase"/>
    <property type="match status" value="1"/>
</dbReference>
<dbReference type="FunFam" id="3.90.420.10:FF:000003">
    <property type="entry name" value="Nitrate reductase"/>
    <property type="match status" value="1"/>
</dbReference>
<dbReference type="FunFam" id="3.40.50.80:FF:000025">
    <property type="entry name" value="Nitrate reductase [NADH]"/>
    <property type="match status" value="1"/>
</dbReference>
<dbReference type="FunFam" id="3.10.120.10:FF:000007">
    <property type="entry name" value="Sulfite oxidase, mitochondrial"/>
    <property type="match status" value="1"/>
</dbReference>
<dbReference type="Gene3D" id="2.60.40.650">
    <property type="match status" value="1"/>
</dbReference>
<dbReference type="Gene3D" id="3.10.120.10">
    <property type="entry name" value="Cytochrome b5-like heme/steroid binding domain"/>
    <property type="match status" value="1"/>
</dbReference>
<dbReference type="Gene3D" id="3.40.50.80">
    <property type="entry name" value="Nucleotide-binding domain of ferredoxin-NADP reductase (FNR) module"/>
    <property type="match status" value="1"/>
</dbReference>
<dbReference type="Gene3D" id="3.90.420.10">
    <property type="entry name" value="Oxidoreductase, molybdopterin-binding domain"/>
    <property type="match status" value="1"/>
</dbReference>
<dbReference type="Gene3D" id="2.40.30.10">
    <property type="entry name" value="Translation factors"/>
    <property type="match status" value="1"/>
</dbReference>
<dbReference type="InterPro" id="IPR008333">
    <property type="entry name" value="Cbr1-like_FAD-bd_dom"/>
</dbReference>
<dbReference type="InterPro" id="IPR001199">
    <property type="entry name" value="Cyt_B5-like_heme/steroid-bd"/>
</dbReference>
<dbReference type="InterPro" id="IPR036400">
    <property type="entry name" value="Cyt_B5-like_heme/steroid_sf"/>
</dbReference>
<dbReference type="InterPro" id="IPR018506">
    <property type="entry name" value="Cyt_B5_heme-BS"/>
</dbReference>
<dbReference type="InterPro" id="IPR017927">
    <property type="entry name" value="FAD-bd_FR_type"/>
</dbReference>
<dbReference type="InterPro" id="IPR001709">
    <property type="entry name" value="Flavoprot_Pyr_Nucl_cyt_Rdtase"/>
</dbReference>
<dbReference type="InterPro" id="IPR039261">
    <property type="entry name" value="FNR_nucleotide-bd"/>
</dbReference>
<dbReference type="InterPro" id="IPR014756">
    <property type="entry name" value="Ig_E-set"/>
</dbReference>
<dbReference type="InterPro" id="IPR005066">
    <property type="entry name" value="MoCF_OxRdtse_dimer"/>
</dbReference>
<dbReference type="InterPro" id="IPR008335">
    <property type="entry name" value="Mopterin_OxRdtase_euk"/>
</dbReference>
<dbReference type="InterPro" id="IPR012137">
    <property type="entry name" value="Nitr_rd_NADH"/>
</dbReference>
<dbReference type="InterPro" id="IPR001433">
    <property type="entry name" value="OxRdtase_FAD/NAD-bd"/>
</dbReference>
<dbReference type="InterPro" id="IPR000572">
    <property type="entry name" value="OxRdtase_Mopterin-bd_dom"/>
</dbReference>
<dbReference type="InterPro" id="IPR036374">
    <property type="entry name" value="OxRdtase_Mopterin-bd_sf"/>
</dbReference>
<dbReference type="InterPro" id="IPR022407">
    <property type="entry name" value="OxRdtase_Mopterin_BS"/>
</dbReference>
<dbReference type="InterPro" id="IPR017938">
    <property type="entry name" value="Riboflavin_synthase-like_b-brl"/>
</dbReference>
<dbReference type="PANTHER" id="PTHR19372:SF7">
    <property type="entry name" value="SULFITE OXIDASE, MITOCHONDRIAL"/>
    <property type="match status" value="1"/>
</dbReference>
<dbReference type="PANTHER" id="PTHR19372">
    <property type="entry name" value="SULFITE REDUCTASE"/>
    <property type="match status" value="1"/>
</dbReference>
<dbReference type="Pfam" id="PF00173">
    <property type="entry name" value="Cyt-b5"/>
    <property type="match status" value="1"/>
</dbReference>
<dbReference type="Pfam" id="PF00970">
    <property type="entry name" value="FAD_binding_6"/>
    <property type="match status" value="1"/>
</dbReference>
<dbReference type="Pfam" id="PF03404">
    <property type="entry name" value="Mo-co_dimer"/>
    <property type="match status" value="1"/>
</dbReference>
<dbReference type="Pfam" id="PF00175">
    <property type="entry name" value="NAD_binding_1"/>
    <property type="match status" value="1"/>
</dbReference>
<dbReference type="Pfam" id="PF00174">
    <property type="entry name" value="Oxidored_molyb"/>
    <property type="match status" value="1"/>
</dbReference>
<dbReference type="PIRSF" id="PIRSF000233">
    <property type="entry name" value="Nitr_rd_NADH"/>
    <property type="match status" value="1"/>
</dbReference>
<dbReference type="PRINTS" id="PR00406">
    <property type="entry name" value="CYTB5RDTASE"/>
</dbReference>
<dbReference type="PRINTS" id="PR00363">
    <property type="entry name" value="CYTOCHROMEB5"/>
</dbReference>
<dbReference type="PRINTS" id="PR00407">
    <property type="entry name" value="EUMOPTERIN"/>
</dbReference>
<dbReference type="PRINTS" id="PR00371">
    <property type="entry name" value="FPNCR"/>
</dbReference>
<dbReference type="SMART" id="SM01117">
    <property type="entry name" value="Cyt-b5"/>
    <property type="match status" value="1"/>
</dbReference>
<dbReference type="SUPFAM" id="SSF55856">
    <property type="entry name" value="Cytochrome b5-like heme/steroid binding domain"/>
    <property type="match status" value="1"/>
</dbReference>
<dbReference type="SUPFAM" id="SSF81296">
    <property type="entry name" value="E set domains"/>
    <property type="match status" value="1"/>
</dbReference>
<dbReference type="SUPFAM" id="SSF52343">
    <property type="entry name" value="Ferredoxin reductase-like, C-terminal NADP-linked domain"/>
    <property type="match status" value="1"/>
</dbReference>
<dbReference type="SUPFAM" id="SSF56524">
    <property type="entry name" value="Oxidoreductase molybdopterin-binding domain"/>
    <property type="match status" value="1"/>
</dbReference>
<dbReference type="SUPFAM" id="SSF63380">
    <property type="entry name" value="Riboflavin synthase domain-like"/>
    <property type="match status" value="1"/>
</dbReference>
<dbReference type="PROSITE" id="PS00191">
    <property type="entry name" value="CYTOCHROME_B5_1"/>
    <property type="match status" value="1"/>
</dbReference>
<dbReference type="PROSITE" id="PS50255">
    <property type="entry name" value="CYTOCHROME_B5_2"/>
    <property type="match status" value="1"/>
</dbReference>
<dbReference type="PROSITE" id="PS51384">
    <property type="entry name" value="FAD_FR"/>
    <property type="match status" value="1"/>
</dbReference>
<dbReference type="PROSITE" id="PS00559">
    <property type="entry name" value="MOLYBDOPTERIN_EUK"/>
    <property type="match status" value="1"/>
</dbReference>
<evidence type="ECO:0000250" key="1"/>
<evidence type="ECO:0000250" key="2">
    <source>
        <dbReference type="UniProtKB" id="A0A286R227"/>
    </source>
</evidence>
<evidence type="ECO:0000250" key="3">
    <source>
        <dbReference type="UniProtKB" id="P17571"/>
    </source>
</evidence>
<evidence type="ECO:0000250" key="4">
    <source>
        <dbReference type="UniProtKB" id="P49050"/>
    </source>
</evidence>
<evidence type="ECO:0000255" key="5"/>
<evidence type="ECO:0000255" key="6">
    <source>
        <dbReference type="PROSITE-ProRule" id="PRU00279"/>
    </source>
</evidence>
<evidence type="ECO:0000255" key="7">
    <source>
        <dbReference type="PROSITE-ProRule" id="PRU00716"/>
    </source>
</evidence>
<evidence type="ECO:0000305" key="8"/>
<proteinExistence type="evidence at transcript level"/>
<keyword id="KW-1015">Disulfide bond</keyword>
<keyword id="KW-0274">FAD</keyword>
<keyword id="KW-0285">Flavoprotein</keyword>
<keyword id="KW-0349">Heme</keyword>
<keyword id="KW-0408">Iron</keyword>
<keyword id="KW-0479">Metal-binding</keyword>
<keyword id="KW-0500">Molybdenum</keyword>
<keyword id="KW-0520">NAD</keyword>
<keyword id="KW-0534">Nitrate assimilation</keyword>
<keyword id="KW-0560">Oxidoreductase</keyword>
<name>NIA_VOLCA</name>
<sequence length="864" mass="96402">MTIPELPLGGIVSQAVELGAPYEPPLTPDHPEWKVHVPAAAVDKKDQDTPDNWVRRDPRILRLTGRHPLNCEPPMDVLMEYGFITPPAVHFVRNHGAAPRIPWAEHRIEINGLVDKPLFLTMDELVALPSITFPCTLVCAGNRRKEENMLKKSIGFNWGPCATSTTYWTGVRLRDLLLLAGIKSPEQGANFVCFRGPKGELPRGSDGSYGTSLTYAKAMDPSSDVIIAYKQNHRWLTPDHGFPVRMIIPGFIGGRMVKWLSEITVTEVESQNFYHFMDNRVLPSHVDEALAKEEGWWYKPEFIINDLNINSAVARPWHDEVVRLDANKPYTMRGYAYAGGGRKIIRCEVSLDDGKTWRLGDIQRFEKPNEYGKYWCWVHWSLDVMTFDFLNAKEVLLRAWDETMNTQPAIITWNVMGMMNNCYYRIKIHPQVDSDGVMGLRFQHPAPVELGERGNMGWREEDNLVAQALAAVKEGATAAAAPAAPPPVVAAAANGGPRQYTMEEVAAHNTEESCWFVHGGKVYDATPYLDEHPGGAESILIVAGADATDEFNSIHSSKAKAMLAQYYIGDLVASKPAAAGATVPEPQPVASTSSPAVDPLVVLNPRQKVKLPLIERIELNRNTRIFRFGLPSPQHRIGLPVGKHVFTYATINGENVMRAYTPISGDEELGRLDMLIKVYFANEHPAFPDGGKMSQHFESLRIGDTVEFKGPLGHFVYDGRGSYTLNGKLHKHATHMSFVAGGTGITPCYAVIKAALRDPEDKTQISLVFANNTEEDILLREELDELANNHPDRFHLWHTVSQTNSSDWKFSTGRVTLEMFKQHLFACSGPECLALMCGPPAMLEHCCVPFLESMGYSKEQMIHF</sequence>
<gene>
    <name type="primary">NITA</name>
</gene>